<feature type="chain" id="PRO_1000188802" description="Acyl carrier protein phosphodiesterase">
    <location>
        <begin position="1"/>
        <end position="193"/>
    </location>
</feature>
<reference key="1">
    <citation type="journal article" date="2009" name="PLoS Genet.">
        <title>Organised genome dynamics in the Escherichia coli species results in highly diverse adaptive paths.</title>
        <authorList>
            <person name="Touchon M."/>
            <person name="Hoede C."/>
            <person name="Tenaillon O."/>
            <person name="Barbe V."/>
            <person name="Baeriswyl S."/>
            <person name="Bidet P."/>
            <person name="Bingen E."/>
            <person name="Bonacorsi S."/>
            <person name="Bouchier C."/>
            <person name="Bouvet O."/>
            <person name="Calteau A."/>
            <person name="Chiapello H."/>
            <person name="Clermont O."/>
            <person name="Cruveiller S."/>
            <person name="Danchin A."/>
            <person name="Diard M."/>
            <person name="Dossat C."/>
            <person name="Karoui M.E."/>
            <person name="Frapy E."/>
            <person name="Garry L."/>
            <person name="Ghigo J.M."/>
            <person name="Gilles A.M."/>
            <person name="Johnson J."/>
            <person name="Le Bouguenec C."/>
            <person name="Lescat M."/>
            <person name="Mangenot S."/>
            <person name="Martinez-Jehanne V."/>
            <person name="Matic I."/>
            <person name="Nassif X."/>
            <person name="Oztas S."/>
            <person name="Petit M.A."/>
            <person name="Pichon C."/>
            <person name="Rouy Z."/>
            <person name="Ruf C.S."/>
            <person name="Schneider D."/>
            <person name="Tourret J."/>
            <person name="Vacherie B."/>
            <person name="Vallenet D."/>
            <person name="Medigue C."/>
            <person name="Rocha E.P.C."/>
            <person name="Denamur E."/>
        </authorList>
    </citation>
    <scope>NUCLEOTIDE SEQUENCE [LARGE SCALE GENOMIC DNA]</scope>
    <source>
        <strain>ED1a</strain>
    </source>
</reference>
<keyword id="KW-0275">Fatty acid biosynthesis</keyword>
<keyword id="KW-0276">Fatty acid metabolism</keyword>
<keyword id="KW-0378">Hydrolase</keyword>
<keyword id="KW-0444">Lipid biosynthesis</keyword>
<keyword id="KW-0443">Lipid metabolism</keyword>
<gene>
    <name evidence="1" type="primary">acpH</name>
    <name type="ordered locus">ECED1_0427</name>
</gene>
<accession>B7MPG5</accession>
<name>ACPH_ECO81</name>
<evidence type="ECO:0000255" key="1">
    <source>
        <dbReference type="HAMAP-Rule" id="MF_01950"/>
    </source>
</evidence>
<protein>
    <recommendedName>
        <fullName evidence="1">Acyl carrier protein phosphodiesterase</fullName>
        <shortName evidence="1">ACP phosphodiesterase</shortName>
        <ecNumber evidence="1">3.1.4.14</ecNumber>
    </recommendedName>
</protein>
<dbReference type="EC" id="3.1.4.14" evidence="1"/>
<dbReference type="EMBL" id="CU928162">
    <property type="protein sequence ID" value="CAR06637.1"/>
    <property type="molecule type" value="Genomic_DNA"/>
</dbReference>
<dbReference type="RefSeq" id="WP_001009885.1">
    <property type="nucleotide sequence ID" value="NC_011745.1"/>
</dbReference>
<dbReference type="SMR" id="B7MPG5"/>
<dbReference type="KEGG" id="ecq:ECED1_0427"/>
<dbReference type="HOGENOM" id="CLU_099370_1_0_6"/>
<dbReference type="Proteomes" id="UP000000748">
    <property type="component" value="Chromosome"/>
</dbReference>
<dbReference type="GO" id="GO:0008770">
    <property type="term" value="F:[acyl-carrier-protein] phosphodiesterase activity"/>
    <property type="evidence" value="ECO:0007669"/>
    <property type="project" value="UniProtKB-UniRule"/>
</dbReference>
<dbReference type="GO" id="GO:0006633">
    <property type="term" value="P:fatty acid biosynthetic process"/>
    <property type="evidence" value="ECO:0007669"/>
    <property type="project" value="UniProtKB-UniRule"/>
</dbReference>
<dbReference type="HAMAP" id="MF_01950">
    <property type="entry name" value="AcpH"/>
    <property type="match status" value="1"/>
</dbReference>
<dbReference type="InterPro" id="IPR007431">
    <property type="entry name" value="ACP_PD"/>
</dbReference>
<dbReference type="InterPro" id="IPR023491">
    <property type="entry name" value="ACP_phosphodiesterase_gpbac"/>
</dbReference>
<dbReference type="NCBIfam" id="NF007466">
    <property type="entry name" value="PRK10045.1"/>
    <property type="match status" value="1"/>
</dbReference>
<dbReference type="PANTHER" id="PTHR38764">
    <property type="entry name" value="ACYL CARRIER PROTEIN PHOSPHODIESTERASE"/>
    <property type="match status" value="1"/>
</dbReference>
<dbReference type="PANTHER" id="PTHR38764:SF1">
    <property type="entry name" value="ACYL CARRIER PROTEIN PHOSPHODIESTERASE"/>
    <property type="match status" value="1"/>
</dbReference>
<dbReference type="Pfam" id="PF04336">
    <property type="entry name" value="ACP_PD"/>
    <property type="match status" value="1"/>
</dbReference>
<dbReference type="PIRSF" id="PIRSF011489">
    <property type="entry name" value="DUF479"/>
    <property type="match status" value="1"/>
</dbReference>
<sequence length="193" mass="22961">MNFLAHLHLAHLAESSLSGNLLADFVRGNPEESFPPDVVAGIHMHRRIDVLTDNLPEVREAREWFRSETRRVAPITLDVMWDHFLSRHWSQLSPDFPLQEFVCYAREQVMTILPDSPPRFINLNNYLWSEQWLVRYRDMDFIQNVLNGMASRRPRLDALRDSWYDLDAHYDALETRFWQFYPRMMAQASRKAL</sequence>
<comment type="function">
    <text evidence="1">Converts holo-ACP to apo-ACP by hydrolytic cleavage of the phosphopantetheine prosthetic group from ACP.</text>
</comment>
<comment type="catalytic activity">
    <reaction evidence="1">
        <text>holo-[ACP] + H2O = apo-[ACP] + (R)-4'-phosphopantetheine + H(+)</text>
        <dbReference type="Rhea" id="RHEA:20537"/>
        <dbReference type="Rhea" id="RHEA-COMP:9685"/>
        <dbReference type="Rhea" id="RHEA-COMP:9690"/>
        <dbReference type="ChEBI" id="CHEBI:15377"/>
        <dbReference type="ChEBI" id="CHEBI:15378"/>
        <dbReference type="ChEBI" id="CHEBI:29999"/>
        <dbReference type="ChEBI" id="CHEBI:61723"/>
        <dbReference type="ChEBI" id="CHEBI:64479"/>
        <dbReference type="EC" id="3.1.4.14"/>
    </reaction>
</comment>
<comment type="similarity">
    <text evidence="1">Belongs to the AcpH family.</text>
</comment>
<proteinExistence type="inferred from homology"/>
<organism>
    <name type="scientific">Escherichia coli O81 (strain ED1a)</name>
    <dbReference type="NCBI Taxonomy" id="585397"/>
    <lineage>
        <taxon>Bacteria</taxon>
        <taxon>Pseudomonadati</taxon>
        <taxon>Pseudomonadota</taxon>
        <taxon>Gammaproteobacteria</taxon>
        <taxon>Enterobacterales</taxon>
        <taxon>Enterobacteriaceae</taxon>
        <taxon>Escherichia</taxon>
    </lineage>
</organism>